<gene>
    <name type="ordered locus">At1g31820</name>
    <name type="ORF">F5M6.17</name>
</gene>
<comment type="function">
    <text evidence="1">Probable cell membrane polyamine/proton symporter involved in the polyamine uptake in cells.</text>
</comment>
<comment type="subcellular location">
    <subcellularLocation>
        <location evidence="1">Cell membrane</location>
        <topology evidence="3">Multi-pass membrane protein</topology>
    </subcellularLocation>
</comment>
<comment type="similarity">
    <text evidence="3">Belongs to the amino acid-polyamine-organocation (APC) superfamily. Polyamine:cation symporter (PHS) (TC 2.A.3.12) family.</text>
</comment>
<organism>
    <name type="scientific">Arabidopsis thaliana</name>
    <name type="common">Mouse-ear cress</name>
    <dbReference type="NCBI Taxonomy" id="3702"/>
    <lineage>
        <taxon>Eukaryota</taxon>
        <taxon>Viridiplantae</taxon>
        <taxon>Streptophyta</taxon>
        <taxon>Embryophyta</taxon>
        <taxon>Tracheophyta</taxon>
        <taxon>Spermatophyta</taxon>
        <taxon>Magnoliopsida</taxon>
        <taxon>eudicotyledons</taxon>
        <taxon>Gunneridae</taxon>
        <taxon>Pentapetalae</taxon>
        <taxon>rosids</taxon>
        <taxon>malvids</taxon>
        <taxon>Brassicales</taxon>
        <taxon>Brassicaceae</taxon>
        <taxon>Camelineae</taxon>
        <taxon>Arabidopsis</taxon>
    </lineage>
</organism>
<name>PHSA_ARATH</name>
<keyword id="KW-1003">Cell membrane</keyword>
<keyword id="KW-0472">Membrane</keyword>
<keyword id="KW-1185">Reference proteome</keyword>
<keyword id="KW-0769">Symport</keyword>
<keyword id="KW-0812">Transmembrane</keyword>
<keyword id="KW-1133">Transmembrane helix</keyword>
<keyword id="KW-0813">Transport</keyword>
<dbReference type="EMBL" id="AC079041">
    <property type="protein sequence ID" value="AAG50712.1"/>
    <property type="molecule type" value="Genomic_DNA"/>
</dbReference>
<dbReference type="EMBL" id="CP002684">
    <property type="protein sequence ID" value="AEE31399.1"/>
    <property type="molecule type" value="Genomic_DNA"/>
</dbReference>
<dbReference type="PIR" id="C86442">
    <property type="entry name" value="C86442"/>
</dbReference>
<dbReference type="SMR" id="Q9C6S4"/>
<dbReference type="BioGRID" id="25306">
    <property type="interactions" value="3"/>
</dbReference>
<dbReference type="FunCoup" id="Q9C6S4">
    <property type="interactions" value="111"/>
</dbReference>
<dbReference type="IntAct" id="Q9C6S4">
    <property type="interactions" value="3"/>
</dbReference>
<dbReference type="STRING" id="3702.Q9C6S4"/>
<dbReference type="PaxDb" id="3702-AT1G31820.1"/>
<dbReference type="ProteomicsDB" id="236750"/>
<dbReference type="EnsemblPlants" id="AT1G31820.1">
    <property type="protein sequence ID" value="AT1G31820.1"/>
    <property type="gene ID" value="AT1G31820"/>
</dbReference>
<dbReference type="Gramene" id="AT1G31820.1">
    <property type="protein sequence ID" value="AT1G31820.1"/>
    <property type="gene ID" value="AT1G31820"/>
</dbReference>
<dbReference type="KEGG" id="ath:AT1G31820"/>
<dbReference type="Araport" id="AT1G31820"/>
<dbReference type="TAIR" id="AT1G31820">
    <property type="gene designation" value="PUT1"/>
</dbReference>
<dbReference type="eggNOG" id="KOG1287">
    <property type="taxonomic scope" value="Eukaryota"/>
</dbReference>
<dbReference type="HOGENOM" id="CLU_007946_17_3_1"/>
<dbReference type="InParanoid" id="Q9C6S4"/>
<dbReference type="OMA" id="TMFPING"/>
<dbReference type="PhylomeDB" id="Q9C6S4"/>
<dbReference type="PRO" id="PR:Q9C6S4"/>
<dbReference type="Proteomes" id="UP000006548">
    <property type="component" value="Chromosome 1"/>
</dbReference>
<dbReference type="ExpressionAtlas" id="Q9C6S4">
    <property type="expression patterns" value="baseline and differential"/>
</dbReference>
<dbReference type="GO" id="GO:0005886">
    <property type="term" value="C:plasma membrane"/>
    <property type="evidence" value="ECO:0007669"/>
    <property type="project" value="UniProtKB-SubCell"/>
</dbReference>
<dbReference type="GO" id="GO:0015203">
    <property type="term" value="F:polyamine transmembrane transporter activity"/>
    <property type="evidence" value="ECO:0000314"/>
    <property type="project" value="TAIR"/>
</dbReference>
<dbReference type="GO" id="GO:0015293">
    <property type="term" value="F:symporter activity"/>
    <property type="evidence" value="ECO:0007669"/>
    <property type="project" value="UniProtKB-KW"/>
</dbReference>
<dbReference type="GO" id="GO:0015846">
    <property type="term" value="P:polyamine transport"/>
    <property type="evidence" value="ECO:0000314"/>
    <property type="project" value="TAIR"/>
</dbReference>
<dbReference type="FunFam" id="1.20.1740.10:FF:000041">
    <property type="entry name" value="Amino acid permease, putative"/>
    <property type="match status" value="1"/>
</dbReference>
<dbReference type="Gene3D" id="1.20.1740.10">
    <property type="entry name" value="Amino acid/polyamine transporter I"/>
    <property type="match status" value="1"/>
</dbReference>
<dbReference type="InterPro" id="IPR002293">
    <property type="entry name" value="AA/rel_permease1"/>
</dbReference>
<dbReference type="InterPro" id="IPR044566">
    <property type="entry name" value="RMV1-like"/>
</dbReference>
<dbReference type="PANTHER" id="PTHR45826:SF16">
    <property type="entry name" value="POLYAMINE TRANSPORTER"/>
    <property type="match status" value="1"/>
</dbReference>
<dbReference type="PANTHER" id="PTHR45826">
    <property type="entry name" value="POLYAMINE TRANSPORTER PUT1"/>
    <property type="match status" value="1"/>
</dbReference>
<dbReference type="Pfam" id="PF13520">
    <property type="entry name" value="AA_permease_2"/>
    <property type="match status" value="1"/>
</dbReference>
<dbReference type="PIRSF" id="PIRSF006060">
    <property type="entry name" value="AA_transporter"/>
    <property type="match status" value="1"/>
</dbReference>
<feature type="chain" id="PRO_0000418908" description="Probable polyamine transporter At1g31820">
    <location>
        <begin position="1"/>
        <end position="482"/>
    </location>
</feature>
<feature type="transmembrane region" description="Helical" evidence="2">
    <location>
        <begin position="36"/>
        <end position="56"/>
    </location>
</feature>
<feature type="transmembrane region" description="Helical" evidence="2">
    <location>
        <begin position="66"/>
        <end position="86"/>
    </location>
</feature>
<feature type="transmembrane region" description="Helical" evidence="2">
    <location>
        <begin position="94"/>
        <end position="114"/>
    </location>
</feature>
<feature type="transmembrane region" description="Helical" evidence="2">
    <location>
        <begin position="143"/>
        <end position="163"/>
    </location>
</feature>
<feature type="transmembrane region" description="Helical" evidence="2">
    <location>
        <begin position="171"/>
        <end position="191"/>
    </location>
</feature>
<feature type="transmembrane region" description="Helical" evidence="2">
    <location>
        <begin position="254"/>
        <end position="274"/>
    </location>
</feature>
<feature type="transmembrane region" description="Helical" evidence="2">
    <location>
        <begin position="294"/>
        <end position="314"/>
    </location>
</feature>
<feature type="transmembrane region" description="Helical" evidence="2">
    <location>
        <begin position="344"/>
        <end position="364"/>
    </location>
</feature>
<feature type="transmembrane region" description="Helical" evidence="2">
    <location>
        <begin position="367"/>
        <end position="387"/>
    </location>
</feature>
<feature type="transmembrane region" description="Helical" evidence="2">
    <location>
        <begin position="406"/>
        <end position="426"/>
    </location>
</feature>
<feature type="transmembrane region" description="Helical" evidence="2">
    <location>
        <begin position="429"/>
        <end position="449"/>
    </location>
</feature>
<sequence>MGDYNMNEFAYGNLYDDDDGDVGGSSKEGNNSIQKVSMLPLVFLIFYEVSGGPFGAEGSVNAAGPLLALLGFVIFPFIWCIPEALITAEMSTMFPINGGFVVWVSSALGTFWGFQVGWMKWLCGVIDNALYPVLFLDYLKSAVPALATGLPRVASILILTLLLTYLNYRGLTIVGWTAVFMGVFSMLPFAVMSLVSIPQLEPSRWLVMDLGNVNWNLYLNTLLWNLNYWDSVSTLAGEVANPKKTLPKALCYGVIFVALSNFLPLLSGTGAIPLDRELWTDGYLAEVAKAIGGGWLQLWVQAAAATSNMGMFLAEMSSDSFQLLGMAELGILPEIFAQRSRYGTPLLGILFSASGVLLLSGLSFQEIIAAENLLYCGGMILEFIAFVRLRKKHPAASRPYKIPVGTVGSILICVPPIVLICLVIVLSTIKVALVSFVMVVIGFLMKPCLNHMDGKKWVKFSVCSDLAEFQKENLDCEESLLR</sequence>
<evidence type="ECO:0000250" key="1"/>
<evidence type="ECO:0000255" key="2"/>
<evidence type="ECO:0000305" key="3"/>
<reference key="1">
    <citation type="journal article" date="2000" name="Nature">
        <title>Sequence and analysis of chromosome 1 of the plant Arabidopsis thaliana.</title>
        <authorList>
            <person name="Theologis A."/>
            <person name="Ecker J.R."/>
            <person name="Palm C.J."/>
            <person name="Federspiel N.A."/>
            <person name="Kaul S."/>
            <person name="White O."/>
            <person name="Alonso J."/>
            <person name="Altafi H."/>
            <person name="Araujo R."/>
            <person name="Bowman C.L."/>
            <person name="Brooks S.Y."/>
            <person name="Buehler E."/>
            <person name="Chan A."/>
            <person name="Chao Q."/>
            <person name="Chen H."/>
            <person name="Cheuk R.F."/>
            <person name="Chin C.W."/>
            <person name="Chung M.K."/>
            <person name="Conn L."/>
            <person name="Conway A.B."/>
            <person name="Conway A.R."/>
            <person name="Creasy T.H."/>
            <person name="Dewar K."/>
            <person name="Dunn P."/>
            <person name="Etgu P."/>
            <person name="Feldblyum T.V."/>
            <person name="Feng J.-D."/>
            <person name="Fong B."/>
            <person name="Fujii C.Y."/>
            <person name="Gill J.E."/>
            <person name="Goldsmith A.D."/>
            <person name="Haas B."/>
            <person name="Hansen N.F."/>
            <person name="Hughes B."/>
            <person name="Huizar L."/>
            <person name="Hunter J.L."/>
            <person name="Jenkins J."/>
            <person name="Johnson-Hopson C."/>
            <person name="Khan S."/>
            <person name="Khaykin E."/>
            <person name="Kim C.J."/>
            <person name="Koo H.L."/>
            <person name="Kremenetskaia I."/>
            <person name="Kurtz D.B."/>
            <person name="Kwan A."/>
            <person name="Lam B."/>
            <person name="Langin-Hooper S."/>
            <person name="Lee A."/>
            <person name="Lee J.M."/>
            <person name="Lenz C.A."/>
            <person name="Li J.H."/>
            <person name="Li Y.-P."/>
            <person name="Lin X."/>
            <person name="Liu S.X."/>
            <person name="Liu Z.A."/>
            <person name="Luros J.S."/>
            <person name="Maiti R."/>
            <person name="Marziali A."/>
            <person name="Militscher J."/>
            <person name="Miranda M."/>
            <person name="Nguyen M."/>
            <person name="Nierman W.C."/>
            <person name="Osborne B.I."/>
            <person name="Pai G."/>
            <person name="Peterson J."/>
            <person name="Pham P.K."/>
            <person name="Rizzo M."/>
            <person name="Rooney T."/>
            <person name="Rowley D."/>
            <person name="Sakano H."/>
            <person name="Salzberg S.L."/>
            <person name="Schwartz J.R."/>
            <person name="Shinn P."/>
            <person name="Southwick A.M."/>
            <person name="Sun H."/>
            <person name="Tallon L.J."/>
            <person name="Tambunga G."/>
            <person name="Toriumi M.J."/>
            <person name="Town C.D."/>
            <person name="Utterback T."/>
            <person name="Van Aken S."/>
            <person name="Vaysberg M."/>
            <person name="Vysotskaia V.S."/>
            <person name="Walker M."/>
            <person name="Wu D."/>
            <person name="Yu G."/>
            <person name="Fraser C.M."/>
            <person name="Venter J.C."/>
            <person name="Davis R.W."/>
        </authorList>
    </citation>
    <scope>NUCLEOTIDE SEQUENCE [LARGE SCALE GENOMIC DNA]</scope>
    <source>
        <strain>cv. Columbia</strain>
    </source>
</reference>
<reference key="2">
    <citation type="journal article" date="2017" name="Plant J.">
        <title>Araport11: a complete reannotation of the Arabidopsis thaliana reference genome.</title>
        <authorList>
            <person name="Cheng C.Y."/>
            <person name="Krishnakumar V."/>
            <person name="Chan A.P."/>
            <person name="Thibaud-Nissen F."/>
            <person name="Schobel S."/>
            <person name="Town C.D."/>
        </authorList>
    </citation>
    <scope>GENOME REANNOTATION</scope>
    <source>
        <strain>cv. Columbia</strain>
    </source>
</reference>
<protein>
    <recommendedName>
        <fullName>Probable polyamine transporter At1g31820</fullName>
    </recommendedName>
</protein>
<proteinExistence type="inferred from homology"/>
<accession>Q9C6S4</accession>